<feature type="chain" id="PRO_0000262071" description="UPF0246 protein MGAS10750_Spy1880">
    <location>
        <begin position="1"/>
        <end position="243"/>
    </location>
</feature>
<name>Y1880_STRPF</name>
<protein>
    <recommendedName>
        <fullName evidence="1">UPF0246 protein MGAS10750_Spy1880</fullName>
    </recommendedName>
</protein>
<accession>Q1J4A6</accession>
<organism>
    <name type="scientific">Streptococcus pyogenes serotype M4 (strain MGAS10750)</name>
    <dbReference type="NCBI Taxonomy" id="370554"/>
    <lineage>
        <taxon>Bacteria</taxon>
        <taxon>Bacillati</taxon>
        <taxon>Bacillota</taxon>
        <taxon>Bacilli</taxon>
        <taxon>Lactobacillales</taxon>
        <taxon>Streptococcaceae</taxon>
        <taxon>Streptococcus</taxon>
    </lineage>
</organism>
<comment type="similarity">
    <text evidence="1">Belongs to the UPF0246 family.</text>
</comment>
<sequence length="243" mass="28203">MLTFLIPTAKEMVIPKESYPHLLPQPSQAILKAMAAMTTEDLAKAYRIKEEAAKKEQQRWQDMTSQQSLAYPAYQLFNGLMYRHIKRDKLTTQEQAYLTQQVYITSSFYGIIPANHPIAEHRHDFHTRIKIEGQSLKSYWRPCYNQFAKEHPQVISLLSSEFDDVFSKDCKQLWIGPKFMAEKEGQFKTHSTISKKARGAFLTACMENNCQTVDSLKSLVFAGFYYHPDLSTDHEFVYIKKEA</sequence>
<dbReference type="EMBL" id="CP000262">
    <property type="protein sequence ID" value="ABF38830.1"/>
    <property type="molecule type" value="Genomic_DNA"/>
</dbReference>
<dbReference type="SMR" id="Q1J4A6"/>
<dbReference type="KEGG" id="spi:MGAS10750_Spy1880"/>
<dbReference type="HOGENOM" id="CLU_061989_2_1_9"/>
<dbReference type="Proteomes" id="UP000002434">
    <property type="component" value="Chromosome"/>
</dbReference>
<dbReference type="GO" id="GO:0005829">
    <property type="term" value="C:cytosol"/>
    <property type="evidence" value="ECO:0007669"/>
    <property type="project" value="TreeGrafter"/>
</dbReference>
<dbReference type="GO" id="GO:0033194">
    <property type="term" value="P:response to hydroperoxide"/>
    <property type="evidence" value="ECO:0007669"/>
    <property type="project" value="TreeGrafter"/>
</dbReference>
<dbReference type="HAMAP" id="MF_00652">
    <property type="entry name" value="UPF0246"/>
    <property type="match status" value="1"/>
</dbReference>
<dbReference type="InterPro" id="IPR005583">
    <property type="entry name" value="YaaA"/>
</dbReference>
<dbReference type="NCBIfam" id="NF002543">
    <property type="entry name" value="PRK02101.1-4"/>
    <property type="match status" value="1"/>
</dbReference>
<dbReference type="PANTHER" id="PTHR30283:SF4">
    <property type="entry name" value="PEROXIDE STRESS RESISTANCE PROTEIN YAAA"/>
    <property type="match status" value="1"/>
</dbReference>
<dbReference type="PANTHER" id="PTHR30283">
    <property type="entry name" value="PEROXIDE STRESS RESPONSE PROTEIN YAAA"/>
    <property type="match status" value="1"/>
</dbReference>
<dbReference type="Pfam" id="PF03883">
    <property type="entry name" value="H2O2_YaaD"/>
    <property type="match status" value="1"/>
</dbReference>
<evidence type="ECO:0000255" key="1">
    <source>
        <dbReference type="HAMAP-Rule" id="MF_00652"/>
    </source>
</evidence>
<reference key="1">
    <citation type="journal article" date="2006" name="Proc. Natl. Acad. Sci. U.S.A.">
        <title>Molecular genetic anatomy of inter- and intraserotype variation in the human bacterial pathogen group A Streptococcus.</title>
        <authorList>
            <person name="Beres S.B."/>
            <person name="Richter E.W."/>
            <person name="Nagiec M.J."/>
            <person name="Sumby P."/>
            <person name="Porcella S.F."/>
            <person name="DeLeo F.R."/>
            <person name="Musser J.M."/>
        </authorList>
    </citation>
    <scope>NUCLEOTIDE SEQUENCE [LARGE SCALE GENOMIC DNA]</scope>
    <source>
        <strain>MGAS10750</strain>
    </source>
</reference>
<gene>
    <name type="ordered locus">MGAS10750_Spy1880</name>
</gene>
<proteinExistence type="inferred from homology"/>